<proteinExistence type="evidence at protein level"/>
<name>DEF_MYCTU</name>
<keyword id="KW-0002">3D-structure</keyword>
<keyword id="KW-0378">Hydrolase</keyword>
<keyword id="KW-0408">Iron</keyword>
<keyword id="KW-0479">Metal-binding</keyword>
<keyword id="KW-0648">Protein biosynthesis</keyword>
<keyword id="KW-1185">Reference proteome</keyword>
<evidence type="ECO:0000255" key="1">
    <source>
        <dbReference type="HAMAP-Rule" id="MF_00163"/>
    </source>
</evidence>
<evidence type="ECO:0000269" key="2">
    <source>
    </source>
</evidence>
<evidence type="ECO:0007829" key="3">
    <source>
        <dbReference type="PDB" id="3E3U"/>
    </source>
</evidence>
<accession>P9WIJ3</accession>
<accession>L0T3J0</accession>
<accession>P96275</accession>
<protein>
    <recommendedName>
        <fullName evidence="1">Peptide deformylase</fullName>
        <shortName evidence="1">PDF</shortName>
        <ecNumber evidence="1">3.5.1.88</ecNumber>
    </recommendedName>
    <alternativeName>
        <fullName evidence="1">Polypeptide deformylase</fullName>
    </alternativeName>
</protein>
<dbReference type="EC" id="3.5.1.88" evidence="1"/>
<dbReference type="EMBL" id="AL123456">
    <property type="protein sequence ID" value="CCP43160.1"/>
    <property type="molecule type" value="Genomic_DNA"/>
</dbReference>
<dbReference type="PIR" id="C70631">
    <property type="entry name" value="C70631"/>
</dbReference>
<dbReference type="RefSeq" id="NP_214943.1">
    <property type="nucleotide sequence ID" value="NC_000962.3"/>
</dbReference>
<dbReference type="RefSeq" id="WP_003402185.1">
    <property type="nucleotide sequence ID" value="NZ_NVQJ01000002.1"/>
</dbReference>
<dbReference type="PDB" id="3E3U">
    <property type="method" value="X-ray"/>
    <property type="resolution" value="1.56 A"/>
    <property type="chains" value="A=1-197"/>
</dbReference>
<dbReference type="PDBsum" id="3E3U"/>
<dbReference type="SMR" id="P9WIJ3"/>
<dbReference type="FunCoup" id="P9WIJ3">
    <property type="interactions" value="203"/>
</dbReference>
<dbReference type="STRING" id="83332.Rv0429c"/>
<dbReference type="BindingDB" id="P9WIJ3"/>
<dbReference type="ChEMBL" id="CHEMBL5765"/>
<dbReference type="DrugBank" id="DB08310">
    <property type="generic name" value="N-[(2R)-2-{[(2S)-2-(1,3-benzoxazol-2-yl)pyrrolidin-1-yl]carbonyl}hexyl]-N-hydroxyformamide"/>
</dbReference>
<dbReference type="PaxDb" id="83332-Rv0429c"/>
<dbReference type="GeneID" id="886366"/>
<dbReference type="KEGG" id="mtu:Rv0429c"/>
<dbReference type="KEGG" id="mtv:RVBD_0429c"/>
<dbReference type="TubercuList" id="Rv0429c"/>
<dbReference type="eggNOG" id="COG0242">
    <property type="taxonomic scope" value="Bacteria"/>
</dbReference>
<dbReference type="InParanoid" id="P9WIJ3"/>
<dbReference type="OrthoDB" id="9804313at2"/>
<dbReference type="PhylomeDB" id="P9WIJ3"/>
<dbReference type="BRENDA" id="3.5.1.88">
    <property type="organism ID" value="3445"/>
</dbReference>
<dbReference type="EvolutionaryTrace" id="P9WIJ3"/>
<dbReference type="Proteomes" id="UP000001584">
    <property type="component" value="Chromosome"/>
</dbReference>
<dbReference type="GO" id="GO:0046872">
    <property type="term" value="F:metal ion binding"/>
    <property type="evidence" value="ECO:0007669"/>
    <property type="project" value="UniProtKB-KW"/>
</dbReference>
<dbReference type="GO" id="GO:0042586">
    <property type="term" value="F:peptide deformylase activity"/>
    <property type="evidence" value="ECO:0000314"/>
    <property type="project" value="MTBBASE"/>
</dbReference>
<dbReference type="GO" id="GO:0043686">
    <property type="term" value="P:co-translational protein modification"/>
    <property type="evidence" value="ECO:0000318"/>
    <property type="project" value="GO_Central"/>
</dbReference>
<dbReference type="GO" id="GO:0006412">
    <property type="term" value="P:translation"/>
    <property type="evidence" value="ECO:0007669"/>
    <property type="project" value="UniProtKB-UniRule"/>
</dbReference>
<dbReference type="CDD" id="cd00487">
    <property type="entry name" value="Pep_deformylase"/>
    <property type="match status" value="1"/>
</dbReference>
<dbReference type="FunFam" id="3.90.45.10:FF:000011">
    <property type="entry name" value="Peptide deformylase"/>
    <property type="match status" value="1"/>
</dbReference>
<dbReference type="Gene3D" id="3.90.45.10">
    <property type="entry name" value="Peptide deformylase"/>
    <property type="match status" value="1"/>
</dbReference>
<dbReference type="HAMAP" id="MF_00163">
    <property type="entry name" value="Pep_deformylase"/>
    <property type="match status" value="1"/>
</dbReference>
<dbReference type="InterPro" id="IPR023635">
    <property type="entry name" value="Peptide_deformylase"/>
</dbReference>
<dbReference type="InterPro" id="IPR036821">
    <property type="entry name" value="Peptide_deformylase_sf"/>
</dbReference>
<dbReference type="NCBIfam" id="TIGR00079">
    <property type="entry name" value="pept_deformyl"/>
    <property type="match status" value="1"/>
</dbReference>
<dbReference type="NCBIfam" id="NF001159">
    <property type="entry name" value="PRK00150.1-3"/>
    <property type="match status" value="1"/>
</dbReference>
<dbReference type="NCBIfam" id="NF009483">
    <property type="entry name" value="PRK12846.1-4"/>
    <property type="match status" value="1"/>
</dbReference>
<dbReference type="PANTHER" id="PTHR10458">
    <property type="entry name" value="PEPTIDE DEFORMYLASE"/>
    <property type="match status" value="1"/>
</dbReference>
<dbReference type="PANTHER" id="PTHR10458:SF2">
    <property type="entry name" value="PEPTIDE DEFORMYLASE, MITOCHONDRIAL"/>
    <property type="match status" value="1"/>
</dbReference>
<dbReference type="Pfam" id="PF01327">
    <property type="entry name" value="Pep_deformylase"/>
    <property type="match status" value="1"/>
</dbReference>
<dbReference type="PIRSF" id="PIRSF004749">
    <property type="entry name" value="Pep_def"/>
    <property type="match status" value="1"/>
</dbReference>
<dbReference type="PRINTS" id="PR01576">
    <property type="entry name" value="PDEFORMYLASE"/>
</dbReference>
<dbReference type="SUPFAM" id="SSF56420">
    <property type="entry name" value="Peptide deformylase"/>
    <property type="match status" value="1"/>
</dbReference>
<gene>
    <name evidence="1" type="primary">def</name>
    <name type="ordered locus">Rv0429c</name>
    <name type="ORF">MTCY22G10.26c</name>
</gene>
<sequence>MAVVPIRIVGDPVLHTATTPVTVAADGSLPADLAQLIATMYDTMDAANGVGLAANQIGCSLRLFVYDCAADRAMTARRRGVVINPVLETSEIPETMPDPDTDDEGCLSVPGESFPTGRAKWARVTGLDADGSPVSIEGTGLFARMLQHETGHLDGFLYLDRLIGRYARNAKRAVKSHGWGVPGLSWLPGEDPDPFGH</sequence>
<reference key="1">
    <citation type="journal article" date="1998" name="Nature">
        <title>Deciphering the biology of Mycobacterium tuberculosis from the complete genome sequence.</title>
        <authorList>
            <person name="Cole S.T."/>
            <person name="Brosch R."/>
            <person name="Parkhill J."/>
            <person name="Garnier T."/>
            <person name="Churcher C.M."/>
            <person name="Harris D.E."/>
            <person name="Gordon S.V."/>
            <person name="Eiglmeier K."/>
            <person name="Gas S."/>
            <person name="Barry C.E. III"/>
            <person name="Tekaia F."/>
            <person name="Badcock K."/>
            <person name="Basham D."/>
            <person name="Brown D."/>
            <person name="Chillingworth T."/>
            <person name="Connor R."/>
            <person name="Davies R.M."/>
            <person name="Devlin K."/>
            <person name="Feltwell T."/>
            <person name="Gentles S."/>
            <person name="Hamlin N."/>
            <person name="Holroyd S."/>
            <person name="Hornsby T."/>
            <person name="Jagels K."/>
            <person name="Krogh A."/>
            <person name="McLean J."/>
            <person name="Moule S."/>
            <person name="Murphy L.D."/>
            <person name="Oliver S."/>
            <person name="Osborne J."/>
            <person name="Quail M.A."/>
            <person name="Rajandream M.A."/>
            <person name="Rogers J."/>
            <person name="Rutter S."/>
            <person name="Seeger K."/>
            <person name="Skelton S."/>
            <person name="Squares S."/>
            <person name="Squares R."/>
            <person name="Sulston J.E."/>
            <person name="Taylor K."/>
            <person name="Whitehead S."/>
            <person name="Barrell B.G."/>
        </authorList>
    </citation>
    <scope>NUCLEOTIDE SEQUENCE [LARGE SCALE GENOMIC DNA]</scope>
    <source>
        <strain>ATCC 25618 / H37Rv</strain>
    </source>
</reference>
<reference key="2">
    <citation type="journal article" date="2008" name="BMC Syst. Biol.">
        <title>targetTB: a target identification pipeline for Mycobacterium tuberculosis through an interactome, reactome and genome-scale structural analysis.</title>
        <authorList>
            <person name="Raman K."/>
            <person name="Yeturu K."/>
            <person name="Chandra N."/>
        </authorList>
    </citation>
    <scope>IDENTIFICATION AS A DRUG TARGET [LARGE SCALE ANALYSIS]</scope>
</reference>
<reference key="3">
    <citation type="journal article" date="2011" name="Mol. Cell. Proteomics">
        <title>Proteogenomic analysis of Mycobacterium tuberculosis by high resolution mass spectrometry.</title>
        <authorList>
            <person name="Kelkar D.S."/>
            <person name="Kumar D."/>
            <person name="Kumar P."/>
            <person name="Balakrishnan L."/>
            <person name="Muthusamy B."/>
            <person name="Yadav A.K."/>
            <person name="Shrivastava P."/>
            <person name="Marimuthu A."/>
            <person name="Anand S."/>
            <person name="Sundaram H."/>
            <person name="Kingsbury R."/>
            <person name="Harsha H.C."/>
            <person name="Nair B."/>
            <person name="Prasad T.S."/>
            <person name="Chauhan D.S."/>
            <person name="Katoch K."/>
            <person name="Katoch V.M."/>
            <person name="Kumar P."/>
            <person name="Chaerkady R."/>
            <person name="Ramachandran S."/>
            <person name="Dash D."/>
            <person name="Pandey A."/>
        </authorList>
    </citation>
    <scope>IDENTIFICATION BY MASS SPECTROMETRY [LARGE SCALE ANALYSIS]</scope>
    <source>
        <strain>ATCC 25618 / H37Rv</strain>
    </source>
</reference>
<organism>
    <name type="scientific">Mycobacterium tuberculosis (strain ATCC 25618 / H37Rv)</name>
    <dbReference type="NCBI Taxonomy" id="83332"/>
    <lineage>
        <taxon>Bacteria</taxon>
        <taxon>Bacillati</taxon>
        <taxon>Actinomycetota</taxon>
        <taxon>Actinomycetes</taxon>
        <taxon>Mycobacteriales</taxon>
        <taxon>Mycobacteriaceae</taxon>
        <taxon>Mycobacterium</taxon>
        <taxon>Mycobacterium tuberculosis complex</taxon>
    </lineage>
</organism>
<comment type="function">
    <text evidence="1">Removes the formyl group from the N-terminal Met of newly synthesized proteins. Requires at least a dipeptide for an efficient rate of reaction. N-terminal L-methionine is a prerequisite for activity but the enzyme has broad specificity at other positions.</text>
</comment>
<comment type="catalytic activity">
    <reaction evidence="1">
        <text>N-terminal N-formyl-L-methionyl-[peptide] + H2O = N-terminal L-methionyl-[peptide] + formate</text>
        <dbReference type="Rhea" id="RHEA:24420"/>
        <dbReference type="Rhea" id="RHEA-COMP:10639"/>
        <dbReference type="Rhea" id="RHEA-COMP:10640"/>
        <dbReference type="ChEBI" id="CHEBI:15377"/>
        <dbReference type="ChEBI" id="CHEBI:15740"/>
        <dbReference type="ChEBI" id="CHEBI:49298"/>
        <dbReference type="ChEBI" id="CHEBI:64731"/>
        <dbReference type="EC" id="3.5.1.88"/>
    </reaction>
</comment>
<comment type="cofactor">
    <cofactor evidence="1">
        <name>Fe(2+)</name>
        <dbReference type="ChEBI" id="CHEBI:29033"/>
    </cofactor>
    <text evidence="1">Binds 1 Fe(2+) ion.</text>
</comment>
<comment type="miscellaneous">
    <text evidence="2">Was identified as a high-confidence drug target.</text>
</comment>
<comment type="similarity">
    <text evidence="1">Belongs to the polypeptide deformylase family.</text>
</comment>
<feature type="chain" id="PRO_0000082806" description="Peptide deformylase">
    <location>
        <begin position="1"/>
        <end position="197"/>
    </location>
</feature>
<feature type="active site" evidence="1">
    <location>
        <position position="149"/>
    </location>
</feature>
<feature type="binding site" evidence="1">
    <location>
        <position position="106"/>
    </location>
    <ligand>
        <name>Fe cation</name>
        <dbReference type="ChEBI" id="CHEBI:24875"/>
    </ligand>
</feature>
<feature type="binding site" evidence="1">
    <location>
        <position position="148"/>
    </location>
    <ligand>
        <name>Fe cation</name>
        <dbReference type="ChEBI" id="CHEBI:24875"/>
    </ligand>
</feature>
<feature type="binding site" evidence="1">
    <location>
        <position position="152"/>
    </location>
    <ligand>
        <name>Fe cation</name>
        <dbReference type="ChEBI" id="CHEBI:24875"/>
    </ligand>
</feature>
<feature type="helix" evidence="3">
    <location>
        <begin position="12"/>
        <end position="14"/>
    </location>
</feature>
<feature type="helix" evidence="3">
    <location>
        <begin position="33"/>
        <end position="46"/>
    </location>
</feature>
<feature type="strand" evidence="3">
    <location>
        <begin position="50"/>
        <end position="53"/>
    </location>
</feature>
<feature type="helix" evidence="3">
    <location>
        <begin position="54"/>
        <end position="57"/>
    </location>
</feature>
<feature type="strand" evidence="3">
    <location>
        <begin position="61"/>
        <end position="67"/>
    </location>
</feature>
<feature type="strand" evidence="3">
    <location>
        <begin position="78"/>
        <end position="90"/>
    </location>
</feature>
<feature type="turn" evidence="3">
    <location>
        <begin position="99"/>
        <end position="101"/>
    </location>
</feature>
<feature type="strand" evidence="3">
    <location>
        <begin position="103"/>
        <end position="105"/>
    </location>
</feature>
<feature type="strand" evidence="3">
    <location>
        <begin position="113"/>
        <end position="115"/>
    </location>
</feature>
<feature type="strand" evidence="3">
    <location>
        <begin position="120"/>
        <end position="127"/>
    </location>
</feature>
<feature type="strand" evidence="3">
    <location>
        <begin position="133"/>
        <end position="139"/>
    </location>
</feature>
<feature type="helix" evidence="3">
    <location>
        <begin position="140"/>
        <end position="153"/>
    </location>
</feature>
<feature type="helix" evidence="3">
    <location>
        <begin position="158"/>
        <end position="161"/>
    </location>
</feature>
<feature type="helix" evidence="3">
    <location>
        <begin position="164"/>
        <end position="177"/>
    </location>
</feature>